<dbReference type="EC" id="2.7.4.6"/>
<dbReference type="EMBL" id="J05457">
    <property type="protein sequence ID" value="AAA33231.1"/>
    <property type="molecule type" value="mRNA"/>
</dbReference>
<dbReference type="EMBL" id="L23067">
    <property type="protein sequence ID" value="AAA16161.1"/>
    <property type="molecule type" value="Genomic_DNA"/>
</dbReference>
<dbReference type="EMBL" id="AAFI02000011">
    <property type="protein sequence ID" value="EAL70593.1"/>
    <property type="molecule type" value="Genomic_DNA"/>
</dbReference>
<dbReference type="EMBL" id="AAFI02000009">
    <property type="protein sequence ID" value="EAL70752.1"/>
    <property type="molecule type" value="Genomic_DNA"/>
</dbReference>
<dbReference type="PIR" id="A49547">
    <property type="entry name" value="A49547"/>
</dbReference>
<dbReference type="RefSeq" id="XP_644519.1">
    <property type="nucleotide sequence ID" value="XM_639427.1"/>
</dbReference>
<dbReference type="RefSeq" id="XP_644731.1">
    <property type="nucleotide sequence ID" value="XM_639639.1"/>
</dbReference>
<dbReference type="PDB" id="1B4S">
    <property type="method" value="X-ray"/>
    <property type="resolution" value="2.50 A"/>
    <property type="chains" value="A/B/C=1-155"/>
</dbReference>
<dbReference type="PDB" id="1B99">
    <property type="method" value="X-ray"/>
    <property type="resolution" value="2.70 A"/>
    <property type="chains" value="A/B/C/D/E/F=1-155"/>
</dbReference>
<dbReference type="PDB" id="1BUX">
    <property type="method" value="X-ray"/>
    <property type="resolution" value="2.80 A"/>
    <property type="chains" value="A/B/C=1-155"/>
</dbReference>
<dbReference type="PDB" id="1F3F">
    <property type="method" value="X-ray"/>
    <property type="resolution" value="1.85 A"/>
    <property type="chains" value="A/B/C=1-155"/>
</dbReference>
<dbReference type="PDB" id="1F6T">
    <property type="method" value="X-ray"/>
    <property type="resolution" value="1.92 A"/>
    <property type="chains" value="A/B/C=1-155"/>
</dbReference>
<dbReference type="PDB" id="1HHQ">
    <property type="method" value="X-ray"/>
    <property type="resolution" value="2.10 A"/>
    <property type="chains" value="A=1-155"/>
</dbReference>
<dbReference type="PDB" id="1HIY">
    <property type="method" value="X-ray"/>
    <property type="resolution" value="2.60 A"/>
    <property type="chains" value="A/B/C=1-155"/>
</dbReference>
<dbReference type="PDB" id="1HLW">
    <property type="method" value="X-ray"/>
    <property type="resolution" value="1.90 A"/>
    <property type="chains" value="A=1-155"/>
</dbReference>
<dbReference type="PDB" id="1KDN">
    <property type="method" value="X-ray"/>
    <property type="resolution" value="2.00 A"/>
    <property type="chains" value="A/B/C=1-155"/>
</dbReference>
<dbReference type="PDB" id="1LEO">
    <property type="method" value="X-ray"/>
    <property type="resolution" value="2.60 A"/>
    <property type="chains" value="A=6-155"/>
</dbReference>
<dbReference type="PDB" id="1LWX">
    <property type="method" value="X-ray"/>
    <property type="resolution" value="2.30 A"/>
    <property type="chains" value="A/B/C=1-155"/>
</dbReference>
<dbReference type="PDB" id="1MN7">
    <property type="method" value="X-ray"/>
    <property type="resolution" value="2.15 A"/>
    <property type="chains" value="A/B=1-155"/>
</dbReference>
<dbReference type="PDB" id="1MN9">
    <property type="method" value="X-ray"/>
    <property type="resolution" value="2.90 A"/>
    <property type="chains" value="A/B/C=1-155"/>
</dbReference>
<dbReference type="PDB" id="1NCL">
    <property type="method" value="X-ray"/>
    <property type="resolution" value="2.20 A"/>
    <property type="chains" value="A=6-155"/>
</dbReference>
<dbReference type="PDB" id="1NDC">
    <property type="method" value="X-ray"/>
    <property type="resolution" value="2.00 A"/>
    <property type="chains" value="A=1-155"/>
</dbReference>
<dbReference type="PDB" id="1NDK">
    <property type="method" value="X-ray"/>
    <property type="resolution" value="2.20 A"/>
    <property type="chains" value="A=1-155"/>
</dbReference>
<dbReference type="PDB" id="1NDP">
    <property type="method" value="X-ray"/>
    <property type="resolution" value="2.20 A"/>
    <property type="chains" value="A/B=1-155"/>
</dbReference>
<dbReference type="PDB" id="1NPK">
    <property type="method" value="X-ray"/>
    <property type="resolution" value="1.80 A"/>
    <property type="chains" value="A=2-155"/>
</dbReference>
<dbReference type="PDB" id="1NSP">
    <property type="method" value="X-ray"/>
    <property type="resolution" value="2.10 A"/>
    <property type="chains" value="A=1-155"/>
</dbReference>
<dbReference type="PDB" id="1PAE">
    <property type="method" value="X-ray"/>
    <property type="resolution" value="2.70 A"/>
    <property type="chains" value="X=1-155"/>
</dbReference>
<dbReference type="PDB" id="1S5Z">
    <property type="method" value="X-ray"/>
    <property type="resolution" value="2.00 A"/>
    <property type="chains" value="A/B/C/D/E/F=1-155"/>
</dbReference>
<dbReference type="PDB" id="2BEF">
    <property type="method" value="X-ray"/>
    <property type="resolution" value="2.30 A"/>
    <property type="chains" value="A/B/C=1-155"/>
</dbReference>
<dbReference type="PDB" id="3FKB">
    <property type="method" value="X-ray"/>
    <property type="resolution" value="1.65 A"/>
    <property type="chains" value="A/B/C/D/E/F=1-155"/>
</dbReference>
<dbReference type="PDB" id="4C6A">
    <property type="method" value="X-ray"/>
    <property type="resolution" value="1.25 A"/>
    <property type="chains" value="A=2-155"/>
</dbReference>
<dbReference type="PDB" id="4CP5">
    <property type="method" value="X-ray"/>
    <property type="resolution" value="2.32 A"/>
    <property type="chains" value="A/B/C/D/E/F=1-155"/>
</dbReference>
<dbReference type="PDBsum" id="1B4S"/>
<dbReference type="PDBsum" id="1B99"/>
<dbReference type="PDBsum" id="1BUX"/>
<dbReference type="PDBsum" id="1F3F"/>
<dbReference type="PDBsum" id="1F6T"/>
<dbReference type="PDBsum" id="1HHQ"/>
<dbReference type="PDBsum" id="1HIY"/>
<dbReference type="PDBsum" id="1HLW"/>
<dbReference type="PDBsum" id="1KDN"/>
<dbReference type="PDBsum" id="1LEO"/>
<dbReference type="PDBsum" id="1LWX"/>
<dbReference type="PDBsum" id="1MN7"/>
<dbReference type="PDBsum" id="1MN9"/>
<dbReference type="PDBsum" id="1NCL"/>
<dbReference type="PDBsum" id="1NDC"/>
<dbReference type="PDBsum" id="1NDK"/>
<dbReference type="PDBsum" id="1NDP"/>
<dbReference type="PDBsum" id="1NPK"/>
<dbReference type="PDBsum" id="1NSP"/>
<dbReference type="PDBsum" id="1PAE"/>
<dbReference type="PDBsum" id="1S5Z"/>
<dbReference type="PDBsum" id="2BEF"/>
<dbReference type="PDBsum" id="3FKB"/>
<dbReference type="PDBsum" id="4C6A"/>
<dbReference type="PDBsum" id="4CP5"/>
<dbReference type="SMR" id="P22887"/>
<dbReference type="FunCoup" id="P22887">
    <property type="interactions" value="581"/>
</dbReference>
<dbReference type="STRING" id="44689.P22887"/>
<dbReference type="PaxDb" id="44689-DDB0185051"/>
<dbReference type="EnsemblProtists" id="EAL70593">
    <property type="protein sequence ID" value="EAL70593"/>
    <property type="gene ID" value="DDB_G0273805"/>
</dbReference>
<dbReference type="EnsemblProtists" id="EAL70752">
    <property type="protein sequence ID" value="EAL70752"/>
    <property type="gene ID" value="DDB_G0273069"/>
</dbReference>
<dbReference type="GeneID" id="8618831"/>
<dbReference type="GeneID" id="8619145"/>
<dbReference type="KEGG" id="ddi:DDB_G0273069"/>
<dbReference type="KEGG" id="ddi:DDB_G0273805"/>
<dbReference type="dictyBase" id="DDB_G0273069">
    <property type="gene designation" value="ndkC-1"/>
</dbReference>
<dbReference type="dictyBase" id="DDB_G0273805">
    <property type="gene designation" value="ndkC-2"/>
</dbReference>
<dbReference type="VEuPathDB" id="AmoebaDB:DDB_G0273805"/>
<dbReference type="eggNOG" id="KOG0888">
    <property type="taxonomic scope" value="Eukaryota"/>
</dbReference>
<dbReference type="HOGENOM" id="CLU_060216_6_3_1"/>
<dbReference type="InParanoid" id="P22887"/>
<dbReference type="OMA" id="QHYGEHK"/>
<dbReference type="PhylomeDB" id="P22887"/>
<dbReference type="BRENDA" id="2.7.4.6">
    <property type="organism ID" value="1939"/>
</dbReference>
<dbReference type="Reactome" id="R-DDI-499943">
    <property type="pathway name" value="Interconversion of nucleotide di- and triphosphates"/>
</dbReference>
<dbReference type="Reactome" id="R-DDI-6798695">
    <property type="pathway name" value="Neutrophil degranulation"/>
</dbReference>
<dbReference type="Reactome" id="R-DDI-9748787">
    <property type="pathway name" value="Azathioprine ADME"/>
</dbReference>
<dbReference type="Reactome" id="R-DDI-9755088">
    <property type="pathway name" value="Ribavirin ADME"/>
</dbReference>
<dbReference type="EvolutionaryTrace" id="P22887"/>
<dbReference type="PRO" id="PR:P22887"/>
<dbReference type="Proteomes" id="UP000002195">
    <property type="component" value="Chromosome 2"/>
</dbReference>
<dbReference type="GO" id="GO:0005737">
    <property type="term" value="C:cytoplasm"/>
    <property type="evidence" value="ECO:0000314"/>
    <property type="project" value="dictyBase"/>
</dbReference>
<dbReference type="GO" id="GO:0005856">
    <property type="term" value="C:cytoskeleton"/>
    <property type="evidence" value="ECO:0000314"/>
    <property type="project" value="dictyBase"/>
</dbReference>
<dbReference type="GO" id="GO:0045335">
    <property type="term" value="C:phagocytic vesicle"/>
    <property type="evidence" value="ECO:0007005"/>
    <property type="project" value="dictyBase"/>
</dbReference>
<dbReference type="GO" id="GO:0005886">
    <property type="term" value="C:plasma membrane"/>
    <property type="evidence" value="ECO:0000314"/>
    <property type="project" value="dictyBase"/>
</dbReference>
<dbReference type="GO" id="GO:0005840">
    <property type="term" value="C:ribosome"/>
    <property type="evidence" value="ECO:0000314"/>
    <property type="project" value="dictyBase"/>
</dbReference>
<dbReference type="GO" id="GO:0030141">
    <property type="term" value="C:secretory granule"/>
    <property type="evidence" value="ECO:0000314"/>
    <property type="project" value="dictyBase"/>
</dbReference>
<dbReference type="GO" id="GO:0005524">
    <property type="term" value="F:ATP binding"/>
    <property type="evidence" value="ECO:0000314"/>
    <property type="project" value="dictyBase"/>
</dbReference>
<dbReference type="GO" id="GO:0046872">
    <property type="term" value="F:metal ion binding"/>
    <property type="evidence" value="ECO:0007669"/>
    <property type="project" value="UniProtKB-KW"/>
</dbReference>
<dbReference type="GO" id="GO:0004550">
    <property type="term" value="F:nucleoside diphosphate kinase activity"/>
    <property type="evidence" value="ECO:0000314"/>
    <property type="project" value="dictyBase"/>
</dbReference>
<dbReference type="GO" id="GO:0030036">
    <property type="term" value="P:actin cytoskeleton organization"/>
    <property type="evidence" value="ECO:0000314"/>
    <property type="project" value="dictyBase"/>
</dbReference>
<dbReference type="GO" id="GO:0019954">
    <property type="term" value="P:asexual reproduction"/>
    <property type="evidence" value="ECO:0000315"/>
    <property type="project" value="dictyBase"/>
</dbReference>
<dbReference type="GO" id="GO:0006241">
    <property type="term" value="P:CTP biosynthetic process"/>
    <property type="evidence" value="ECO:0007669"/>
    <property type="project" value="InterPro"/>
</dbReference>
<dbReference type="GO" id="GO:0006187">
    <property type="term" value="P:dGTP biosynthetic process from dGDP"/>
    <property type="evidence" value="ECO:0000314"/>
    <property type="project" value="dictyBase"/>
</dbReference>
<dbReference type="GO" id="GO:0007186">
    <property type="term" value="P:G protein-coupled receptor signaling pathway"/>
    <property type="evidence" value="ECO:0000315"/>
    <property type="project" value="dictyBase"/>
</dbReference>
<dbReference type="GO" id="GO:0006183">
    <property type="term" value="P:GTP biosynthetic process"/>
    <property type="evidence" value="ECO:0007669"/>
    <property type="project" value="InterPro"/>
</dbReference>
<dbReference type="GO" id="GO:0045920">
    <property type="term" value="P:negative regulation of exocytosis"/>
    <property type="evidence" value="ECO:0000315"/>
    <property type="project" value="dictyBase"/>
</dbReference>
<dbReference type="GO" id="GO:0050765">
    <property type="term" value="P:negative regulation of phagocytosis"/>
    <property type="evidence" value="ECO:0000315"/>
    <property type="project" value="dictyBase"/>
</dbReference>
<dbReference type="GO" id="GO:0048550">
    <property type="term" value="P:negative regulation of pinocytosis"/>
    <property type="evidence" value="ECO:0000315"/>
    <property type="project" value="dictyBase"/>
</dbReference>
<dbReference type="GO" id="GO:0009142">
    <property type="term" value="P:nucleoside triphosphate biosynthetic process"/>
    <property type="evidence" value="ECO:0000314"/>
    <property type="project" value="dictyBase"/>
</dbReference>
<dbReference type="GO" id="GO:0009617">
    <property type="term" value="P:response to bacterium"/>
    <property type="evidence" value="ECO:0007007"/>
    <property type="project" value="dictyBase"/>
</dbReference>
<dbReference type="GO" id="GO:0006414">
    <property type="term" value="P:translational elongation"/>
    <property type="evidence" value="ECO:0000314"/>
    <property type="project" value="dictyBase"/>
</dbReference>
<dbReference type="GO" id="GO:0006228">
    <property type="term" value="P:UTP biosynthetic process"/>
    <property type="evidence" value="ECO:0007669"/>
    <property type="project" value="InterPro"/>
</dbReference>
<dbReference type="CDD" id="cd04413">
    <property type="entry name" value="NDPk_I"/>
    <property type="match status" value="1"/>
</dbReference>
<dbReference type="FunFam" id="3.30.70.141:FF:000002">
    <property type="entry name" value="Nucleoside diphosphate kinase"/>
    <property type="match status" value="1"/>
</dbReference>
<dbReference type="Gene3D" id="3.30.70.141">
    <property type="entry name" value="Nucleoside diphosphate kinase-like domain"/>
    <property type="match status" value="1"/>
</dbReference>
<dbReference type="HAMAP" id="MF_00451">
    <property type="entry name" value="NDP_kinase"/>
    <property type="match status" value="1"/>
</dbReference>
<dbReference type="InterPro" id="IPR034907">
    <property type="entry name" value="NDK-like_dom"/>
</dbReference>
<dbReference type="InterPro" id="IPR036850">
    <property type="entry name" value="NDK-like_dom_sf"/>
</dbReference>
<dbReference type="InterPro" id="IPR001564">
    <property type="entry name" value="Nucleoside_diP_kinase"/>
</dbReference>
<dbReference type="InterPro" id="IPR023005">
    <property type="entry name" value="Nucleoside_diP_kinase_AS"/>
</dbReference>
<dbReference type="NCBIfam" id="NF001908">
    <property type="entry name" value="PRK00668.1"/>
    <property type="match status" value="1"/>
</dbReference>
<dbReference type="PANTHER" id="PTHR11349">
    <property type="entry name" value="NUCLEOSIDE DIPHOSPHATE KINASE"/>
    <property type="match status" value="1"/>
</dbReference>
<dbReference type="Pfam" id="PF00334">
    <property type="entry name" value="NDK"/>
    <property type="match status" value="1"/>
</dbReference>
<dbReference type="PRINTS" id="PR01243">
    <property type="entry name" value="NUCDPKINASE"/>
</dbReference>
<dbReference type="SMART" id="SM00562">
    <property type="entry name" value="NDK"/>
    <property type="match status" value="1"/>
</dbReference>
<dbReference type="SUPFAM" id="SSF54919">
    <property type="entry name" value="Nucleoside diphosphate kinase, NDK"/>
    <property type="match status" value="1"/>
</dbReference>
<dbReference type="PROSITE" id="PS00469">
    <property type="entry name" value="NDPK"/>
    <property type="match status" value="1"/>
</dbReference>
<dbReference type="PROSITE" id="PS51374">
    <property type="entry name" value="NDPK_LIKE"/>
    <property type="match status" value="1"/>
</dbReference>
<evidence type="ECO:0000250" key="1"/>
<evidence type="ECO:0000305" key="2"/>
<evidence type="ECO:0007829" key="3">
    <source>
        <dbReference type="PDB" id="1LEO"/>
    </source>
</evidence>
<evidence type="ECO:0007829" key="4">
    <source>
        <dbReference type="PDB" id="1LWX"/>
    </source>
</evidence>
<evidence type="ECO:0007829" key="5">
    <source>
        <dbReference type="PDB" id="4C6A"/>
    </source>
</evidence>
<keyword id="KW-0002">3D-structure</keyword>
<keyword id="KW-0067">ATP-binding</keyword>
<keyword id="KW-0963">Cytoplasm</keyword>
<keyword id="KW-0418">Kinase</keyword>
<keyword id="KW-0460">Magnesium</keyword>
<keyword id="KW-0479">Metal-binding</keyword>
<keyword id="KW-0546">Nucleotide metabolism</keyword>
<keyword id="KW-0547">Nucleotide-binding</keyword>
<keyword id="KW-0597">Phosphoprotein</keyword>
<keyword id="KW-1185">Reference proteome</keyword>
<keyword id="KW-0808">Transferase</keyword>
<comment type="function">
    <text>Major role in the synthesis of nucleoside triphosphates other than ATP.</text>
</comment>
<comment type="catalytic activity">
    <reaction>
        <text>a 2'-deoxyribonucleoside 5'-diphosphate + ATP = a 2'-deoxyribonucleoside 5'-triphosphate + ADP</text>
        <dbReference type="Rhea" id="RHEA:44640"/>
        <dbReference type="ChEBI" id="CHEBI:30616"/>
        <dbReference type="ChEBI" id="CHEBI:61560"/>
        <dbReference type="ChEBI" id="CHEBI:73316"/>
        <dbReference type="ChEBI" id="CHEBI:456216"/>
        <dbReference type="EC" id="2.7.4.6"/>
    </reaction>
</comment>
<comment type="catalytic activity">
    <reaction>
        <text>a ribonucleoside 5'-diphosphate + ATP = a ribonucleoside 5'-triphosphate + ADP</text>
        <dbReference type="Rhea" id="RHEA:18113"/>
        <dbReference type="ChEBI" id="CHEBI:30616"/>
        <dbReference type="ChEBI" id="CHEBI:57930"/>
        <dbReference type="ChEBI" id="CHEBI:61557"/>
        <dbReference type="ChEBI" id="CHEBI:456216"/>
        <dbReference type="EC" id="2.7.4.6"/>
    </reaction>
</comment>
<comment type="cofactor">
    <cofactor evidence="1">
        <name>Mg(2+)</name>
        <dbReference type="ChEBI" id="CHEBI:18420"/>
    </cofactor>
</comment>
<comment type="subunit">
    <text>Homohexamer.</text>
</comment>
<comment type="subcellular location">
    <subcellularLocation>
        <location>Cytoplasm</location>
    </subcellularLocation>
</comment>
<comment type="similarity">
    <text evidence="2">Belongs to the NDK family.</text>
</comment>
<comment type="caution">
    <text evidence="2">The gene for this protein is duplicated in strains AX3 and AX4. These strains contain a duplication of a segment of 750 kb of chromosome 2 compared to the corresponding sequence in strain AX2.</text>
</comment>
<protein>
    <recommendedName>
        <fullName>Nucleoside diphosphate kinase, cytosolic</fullName>
        <shortName>NDK</shortName>
        <shortName>NDP kinase</shortName>
        <ecNumber>2.7.4.6</ecNumber>
    </recommendedName>
</protein>
<accession>P22887</accession>
<accession>Q556V0</accession>
<name>NDKC_DICDI</name>
<feature type="chain" id="PRO_0000137107" description="Nucleoside diphosphate kinase, cytosolic">
    <location>
        <begin position="1"/>
        <end position="155"/>
    </location>
</feature>
<feature type="active site" description="Pros-phosphohistidine intermediate">
    <location>
        <position position="122"/>
    </location>
</feature>
<feature type="binding site">
    <location>
        <position position="16"/>
    </location>
    <ligand>
        <name>ATP</name>
        <dbReference type="ChEBI" id="CHEBI:30616"/>
    </ligand>
</feature>
<feature type="binding site">
    <location>
        <position position="64"/>
    </location>
    <ligand>
        <name>ATP</name>
        <dbReference type="ChEBI" id="CHEBI:30616"/>
    </ligand>
</feature>
<feature type="binding site">
    <location>
        <position position="92"/>
    </location>
    <ligand>
        <name>ATP</name>
        <dbReference type="ChEBI" id="CHEBI:30616"/>
    </ligand>
</feature>
<feature type="binding site">
    <location>
        <position position="98"/>
    </location>
    <ligand>
        <name>ATP</name>
        <dbReference type="ChEBI" id="CHEBI:30616"/>
    </ligand>
</feature>
<feature type="binding site">
    <location>
        <position position="109"/>
    </location>
    <ligand>
        <name>ATP</name>
        <dbReference type="ChEBI" id="CHEBI:30616"/>
    </ligand>
</feature>
<feature type="binding site">
    <location>
        <position position="119"/>
    </location>
    <ligand>
        <name>ATP</name>
        <dbReference type="ChEBI" id="CHEBI:30616"/>
    </ligand>
</feature>
<feature type="helix" evidence="5">
    <location>
        <begin position="6"/>
        <end position="8"/>
    </location>
</feature>
<feature type="strand" evidence="5">
    <location>
        <begin position="10"/>
        <end position="15"/>
    </location>
</feature>
<feature type="helix" evidence="5">
    <location>
        <begin position="17"/>
        <end position="21"/>
    </location>
</feature>
<feature type="helix" evidence="5">
    <location>
        <begin position="25"/>
        <end position="35"/>
    </location>
</feature>
<feature type="strand" evidence="5">
    <location>
        <begin position="38"/>
        <end position="45"/>
    </location>
</feature>
<feature type="helix" evidence="5">
    <location>
        <begin position="49"/>
        <end position="55"/>
    </location>
</feature>
<feature type="helix" evidence="5">
    <location>
        <begin position="57"/>
        <end position="59"/>
    </location>
</feature>
<feature type="strand" evidence="4">
    <location>
        <begin position="60"/>
        <end position="62"/>
    </location>
</feature>
<feature type="helix" evidence="5">
    <location>
        <begin position="65"/>
        <end position="72"/>
    </location>
</feature>
<feature type="strand" evidence="5">
    <location>
        <begin position="77"/>
        <end position="84"/>
    </location>
</feature>
<feature type="helix" evidence="5">
    <location>
        <begin position="87"/>
        <end position="95"/>
    </location>
</feature>
<feature type="helix" evidence="5">
    <location>
        <begin position="100"/>
        <end position="102"/>
    </location>
</feature>
<feature type="helix" evidence="5">
    <location>
        <begin position="108"/>
        <end position="112"/>
    </location>
</feature>
<feature type="strand" evidence="3">
    <location>
        <begin position="116"/>
        <end position="118"/>
    </location>
</feature>
<feature type="strand" evidence="5">
    <location>
        <begin position="121"/>
        <end position="123"/>
    </location>
</feature>
<feature type="helix" evidence="5">
    <location>
        <begin position="127"/>
        <end position="137"/>
    </location>
</feature>
<feature type="helix" evidence="5">
    <location>
        <begin position="140"/>
        <end position="142"/>
    </location>
</feature>
<feature type="turn" evidence="5">
    <location>
        <begin position="151"/>
        <end position="153"/>
    </location>
</feature>
<proteinExistence type="evidence at protein level"/>
<reference key="1">
    <citation type="journal article" date="1990" name="J. Biol. Chem.">
        <title>Functional cloning of a nucleoside diphosphate kinase from Dictyostelium discoideum.</title>
        <authorList>
            <person name="Lacombe M.-L."/>
            <person name="Wallet V."/>
            <person name="Troll H."/>
            <person name="Veron M."/>
        </authorList>
    </citation>
    <scope>NUCLEOTIDE SEQUENCE [MRNA]</scope>
</reference>
<reference key="2">
    <citation type="journal article" date="1993" name="J. Biol. Chem.">
        <title>Separate nuclear genes encode cytosolic and mitochondrial nucleoside diphosphate kinase in Dictyostelium discoideum.</title>
        <authorList>
            <person name="Troll H."/>
            <person name="Winckler T."/>
            <person name="Lascu I."/>
            <person name="Mueller N."/>
            <person name="Saurin W."/>
            <person name="Veron M."/>
            <person name="Mutzel R."/>
        </authorList>
    </citation>
    <scope>NUCLEOTIDE SEQUENCE [GENOMIC DNA]</scope>
    <source>
        <strain>AX2</strain>
    </source>
</reference>
<reference key="3">
    <citation type="journal article" date="2002" name="Nature">
        <title>Sequence and analysis of chromosome 2 of Dictyostelium discoideum.</title>
        <authorList>
            <person name="Gloeckner G."/>
            <person name="Eichinger L."/>
            <person name="Szafranski K."/>
            <person name="Pachebat J.A."/>
            <person name="Bankier A.T."/>
            <person name="Dear P.H."/>
            <person name="Lehmann R."/>
            <person name="Baumgart C."/>
            <person name="Parra G."/>
            <person name="Abril J.F."/>
            <person name="Guigo R."/>
            <person name="Kumpf K."/>
            <person name="Tunggal B."/>
            <person name="Cox E.C."/>
            <person name="Quail M.A."/>
            <person name="Platzer M."/>
            <person name="Rosenthal A."/>
            <person name="Noegel A.A."/>
        </authorList>
    </citation>
    <scope>NUCLEOTIDE SEQUENCE [LARGE SCALE GENOMIC DNA]</scope>
    <source>
        <strain>AX4</strain>
    </source>
</reference>
<reference key="4">
    <citation type="journal article" date="2005" name="Nature">
        <title>The genome of the social amoeba Dictyostelium discoideum.</title>
        <authorList>
            <person name="Eichinger L."/>
            <person name="Pachebat J.A."/>
            <person name="Gloeckner G."/>
            <person name="Rajandream M.A."/>
            <person name="Sucgang R."/>
            <person name="Berriman M."/>
            <person name="Song J."/>
            <person name="Olsen R."/>
            <person name="Szafranski K."/>
            <person name="Xu Q."/>
            <person name="Tunggal B."/>
            <person name="Kummerfeld S."/>
            <person name="Madera M."/>
            <person name="Konfortov B.A."/>
            <person name="Rivero F."/>
            <person name="Bankier A.T."/>
            <person name="Lehmann R."/>
            <person name="Hamlin N."/>
            <person name="Davies R."/>
            <person name="Gaudet P."/>
            <person name="Fey P."/>
            <person name="Pilcher K."/>
            <person name="Chen G."/>
            <person name="Saunders D."/>
            <person name="Sodergren E.J."/>
            <person name="Davis P."/>
            <person name="Kerhornou A."/>
            <person name="Nie X."/>
            <person name="Hall N."/>
            <person name="Anjard C."/>
            <person name="Hemphill L."/>
            <person name="Bason N."/>
            <person name="Farbrother P."/>
            <person name="Desany B."/>
            <person name="Just E."/>
            <person name="Morio T."/>
            <person name="Rost R."/>
            <person name="Churcher C.M."/>
            <person name="Cooper J."/>
            <person name="Haydock S."/>
            <person name="van Driessche N."/>
            <person name="Cronin A."/>
            <person name="Goodhead I."/>
            <person name="Muzny D.M."/>
            <person name="Mourier T."/>
            <person name="Pain A."/>
            <person name="Lu M."/>
            <person name="Harper D."/>
            <person name="Lindsay R."/>
            <person name="Hauser H."/>
            <person name="James K.D."/>
            <person name="Quiles M."/>
            <person name="Madan Babu M."/>
            <person name="Saito T."/>
            <person name="Buchrieser C."/>
            <person name="Wardroper A."/>
            <person name="Felder M."/>
            <person name="Thangavelu M."/>
            <person name="Johnson D."/>
            <person name="Knights A."/>
            <person name="Loulseged H."/>
            <person name="Mungall K.L."/>
            <person name="Oliver K."/>
            <person name="Price C."/>
            <person name="Quail M.A."/>
            <person name="Urushihara H."/>
            <person name="Hernandez J."/>
            <person name="Rabbinowitsch E."/>
            <person name="Steffen D."/>
            <person name="Sanders M."/>
            <person name="Ma J."/>
            <person name="Kohara Y."/>
            <person name="Sharp S."/>
            <person name="Simmonds M.N."/>
            <person name="Spiegler S."/>
            <person name="Tivey A."/>
            <person name="Sugano S."/>
            <person name="White B."/>
            <person name="Walker D."/>
            <person name="Woodward J.R."/>
            <person name="Winckler T."/>
            <person name="Tanaka Y."/>
            <person name="Shaulsky G."/>
            <person name="Schleicher M."/>
            <person name="Weinstock G.M."/>
            <person name="Rosenthal A."/>
            <person name="Cox E.C."/>
            <person name="Chisholm R.L."/>
            <person name="Gibbs R.A."/>
            <person name="Loomis W.F."/>
            <person name="Platzer M."/>
            <person name="Kay R.R."/>
            <person name="Williams J.G."/>
            <person name="Dear P.H."/>
            <person name="Noegel A.A."/>
            <person name="Barrell B.G."/>
            <person name="Kuspa A."/>
        </authorList>
    </citation>
    <scope>NUCLEOTIDE SEQUENCE [LARGE SCALE GENOMIC DNA]</scope>
    <source>
        <strain>AX4</strain>
    </source>
</reference>
<reference key="5">
    <citation type="journal article" date="2006" name="Mol. Cell. Proteomics">
        <title>Proteomics fingerprinting of phagosome maturation and evidence for the role of a Galpha during uptake.</title>
        <authorList>
            <person name="Gotthardt D."/>
            <person name="Blancheteau V."/>
            <person name="Bosserhoff A."/>
            <person name="Ruppert T."/>
            <person name="Delorenzi M."/>
            <person name="Soldati T."/>
        </authorList>
    </citation>
    <scope>IDENTIFICATION BY MASS SPECTROMETRY [LARGE SCALE ANALYSIS]</scope>
    <source>
        <strain>AX2</strain>
    </source>
</reference>
<reference key="6">
    <citation type="journal article" date="1992" name="EMBO J.">
        <title>X-ray structure of nucleoside diphosphate kinase.</title>
        <authorList>
            <person name="Dumas C."/>
            <person name="Lascu I."/>
            <person name="Morera S."/>
            <person name="Glaser P."/>
            <person name="Fourme R."/>
            <person name="Wallet V."/>
            <person name="Lacombe M.-L."/>
            <person name="Veron M."/>
            <person name="Janin J."/>
        </authorList>
    </citation>
    <scope>X-RAY CRYSTALLOGRAPHY (2.2 ANGSTROMS)</scope>
</reference>
<reference key="7">
    <citation type="journal article" date="1994" name="J. Mol. Biol.">
        <title>Refined X-ray structure of Dictyostelium discoideum nucleoside diphosphate kinase at 1.8-A resolution.</title>
        <authorList>
            <person name="Morera S."/>
            <person name="Lebras G."/>
            <person name="Lascu I."/>
            <person name="Lacombe M.-L."/>
            <person name="Veron M."/>
            <person name="Janin J."/>
        </authorList>
    </citation>
    <scope>X-RAY CRYSTALLOGRAPHY (1.8 ANGSTROMS)</scope>
</reference>
<reference key="8">
    <citation type="journal article" date="1996" name="J. Biol. Chem.">
        <title>Nucleoside diphosphate kinase. Investigation of the intersubunit contacts by site-directed mutagenesis and crystallography.</title>
        <authorList>
            <person name="Karlsson A."/>
            <person name="Mesnildrey S."/>
            <person name="Xu Y."/>
            <person name="Morera S."/>
            <person name="Janin J."/>
            <person name="Veron M."/>
        </authorList>
    </citation>
    <scope>X-RAY CRYSTALLOGRAPHY (2.6 ANGSTROMS)</scope>
</reference>
<reference key="9">
    <citation type="journal article" date="1997" name="Proc. Natl. Acad. Sci. U.S.A.">
        <title>X-ray analysis of azido-thymidine diphosphate binding to nucleoside diphosphate kinase.</title>
        <authorList>
            <person name="Xu Y."/>
            <person name="Sellam O."/>
            <person name="Morera S."/>
            <person name="Sarfati S."/>
            <person name="Biondi R."/>
            <person name="Veron M."/>
            <person name="Janin J."/>
        </authorList>
    </citation>
    <scope>X-RAY CRYSTALLOGRAPHY (2.3 ANGSTROMS)</scope>
</reference>
<reference key="10">
    <citation type="journal article" date="1998" name="J. Biol. Chem.">
        <title>3'-Phosphorylated nucleotides are tight binding inhibitors of nucleoside diphosphate kinase activity.</title>
        <authorList>
            <person name="Schneider B."/>
            <person name="Xu Y.W."/>
            <person name="Janin J."/>
            <person name="Veron M."/>
            <person name="Deville-Bonne D."/>
        </authorList>
    </citation>
    <scope>X-RAY CRYSTALLOGRAPHY (2.8 ANGSTROMS)</scope>
</reference>
<reference key="11">
    <citation type="journal article" date="1999" name="Biochemistry">
        <title>Nucleophilic activation by positioning in phosphoryl transfer catalyzed by nucleoside diphosphate kinase.</title>
        <authorList>
            <person name="Admiraal S.J."/>
            <person name="Schneider B."/>
            <person name="Meyer P."/>
            <person name="Janin J."/>
            <person name="Veron M."/>
            <person name="Deville-Bonne D."/>
            <person name="Herschlag D."/>
        </authorList>
    </citation>
    <scope>X-RAY CRYSTALLOGRAPHY (2.5 ANGSTROMS)</scope>
</reference>
<reference key="12">
    <citation type="journal article" date="1999" name="Biochemistry">
        <title>Catalytic mechanism of nucleoside diphosphate kinase investigated using nucleotide analogues, viscosity effects, and X-ray crystallography.</title>
        <authorList>
            <person name="Gonin P."/>
            <person name="Xu Y."/>
            <person name="Milon L."/>
            <person name="Dabernat S."/>
            <person name="Morr M."/>
            <person name="Kumar R."/>
            <person name="Lacombe M.L."/>
            <person name="Janin J."/>
            <person name="Lascu I."/>
        </authorList>
    </citation>
    <scope>X-RAY CRYSTALLOGRAPHY (2.7 ANGSTROMS)</scope>
</reference>
<gene>
    <name type="primary">ndkC-1</name>
    <name type="synonym">gip17</name>
    <name type="synonym">ndkB</name>
    <name type="ORF">DDB_G0273069</name>
</gene>
<gene>
    <name type="primary">ndkC-2</name>
    <name type="synonym">gip17</name>
    <name type="synonym">ndkB</name>
    <name type="ORF">DDB_G0273805</name>
</gene>
<organism>
    <name type="scientific">Dictyostelium discoideum</name>
    <name type="common">Social amoeba</name>
    <dbReference type="NCBI Taxonomy" id="44689"/>
    <lineage>
        <taxon>Eukaryota</taxon>
        <taxon>Amoebozoa</taxon>
        <taxon>Evosea</taxon>
        <taxon>Eumycetozoa</taxon>
        <taxon>Dictyostelia</taxon>
        <taxon>Dictyosteliales</taxon>
        <taxon>Dictyosteliaceae</taxon>
        <taxon>Dictyostelium</taxon>
    </lineage>
</organism>
<sequence length="155" mass="16794">MSTNKVNKERTFLAVKPDGVARGLVGEIIARYEKKGFVLVGLKQLVPTKDLAESHYAEHKERPFFGGLVSFITSGPVVAMVFEGKGVVASARLMIGVTNPLASAPGSIRGDFGVDVGRNIIHGSDSVESANREIALWFKPEELLTEVKPNPNLYE</sequence>